<dbReference type="EMBL" id="CP000946">
    <property type="protein sequence ID" value="ACA79414.1"/>
    <property type="molecule type" value="Genomic_DNA"/>
</dbReference>
<dbReference type="RefSeq" id="WP_001196062.1">
    <property type="nucleotide sequence ID" value="NZ_MTFT01000012.1"/>
</dbReference>
<dbReference type="SMR" id="B1IT03"/>
<dbReference type="GeneID" id="93777620"/>
<dbReference type="KEGG" id="ecl:EcolC_3810"/>
<dbReference type="HOGENOM" id="CLU_078938_4_1_6"/>
<dbReference type="GO" id="GO:1990904">
    <property type="term" value="C:ribonucleoprotein complex"/>
    <property type="evidence" value="ECO:0007669"/>
    <property type="project" value="UniProtKB-KW"/>
</dbReference>
<dbReference type="GO" id="GO:0005840">
    <property type="term" value="C:ribosome"/>
    <property type="evidence" value="ECO:0007669"/>
    <property type="project" value="UniProtKB-KW"/>
</dbReference>
<dbReference type="GO" id="GO:0019843">
    <property type="term" value="F:rRNA binding"/>
    <property type="evidence" value="ECO:0007669"/>
    <property type="project" value="UniProtKB-UniRule"/>
</dbReference>
<dbReference type="GO" id="GO:0003735">
    <property type="term" value="F:structural constituent of ribosome"/>
    <property type="evidence" value="ECO:0007669"/>
    <property type="project" value="InterPro"/>
</dbReference>
<dbReference type="GO" id="GO:0006412">
    <property type="term" value="P:translation"/>
    <property type="evidence" value="ECO:0007669"/>
    <property type="project" value="UniProtKB-UniRule"/>
</dbReference>
<dbReference type="FunFam" id="3.10.430.100:FF:000001">
    <property type="entry name" value="50S ribosomal protein L9"/>
    <property type="match status" value="1"/>
</dbReference>
<dbReference type="FunFam" id="3.40.5.10:FF:000001">
    <property type="entry name" value="50S ribosomal protein L9"/>
    <property type="match status" value="1"/>
</dbReference>
<dbReference type="Gene3D" id="3.10.430.100">
    <property type="entry name" value="Ribosomal protein L9, C-terminal domain"/>
    <property type="match status" value="1"/>
</dbReference>
<dbReference type="Gene3D" id="3.40.5.10">
    <property type="entry name" value="Ribosomal protein L9, N-terminal domain"/>
    <property type="match status" value="1"/>
</dbReference>
<dbReference type="HAMAP" id="MF_00503">
    <property type="entry name" value="Ribosomal_bL9"/>
    <property type="match status" value="1"/>
</dbReference>
<dbReference type="InterPro" id="IPR000244">
    <property type="entry name" value="Ribosomal_bL9"/>
</dbReference>
<dbReference type="InterPro" id="IPR009027">
    <property type="entry name" value="Ribosomal_bL9/RNase_H1_N"/>
</dbReference>
<dbReference type="InterPro" id="IPR020594">
    <property type="entry name" value="Ribosomal_bL9_bac/chp"/>
</dbReference>
<dbReference type="InterPro" id="IPR020069">
    <property type="entry name" value="Ribosomal_bL9_C"/>
</dbReference>
<dbReference type="InterPro" id="IPR036791">
    <property type="entry name" value="Ribosomal_bL9_C_sf"/>
</dbReference>
<dbReference type="InterPro" id="IPR020070">
    <property type="entry name" value="Ribosomal_bL9_N"/>
</dbReference>
<dbReference type="InterPro" id="IPR036935">
    <property type="entry name" value="Ribosomal_bL9_N_sf"/>
</dbReference>
<dbReference type="NCBIfam" id="TIGR00158">
    <property type="entry name" value="L9"/>
    <property type="match status" value="1"/>
</dbReference>
<dbReference type="PANTHER" id="PTHR21368">
    <property type="entry name" value="50S RIBOSOMAL PROTEIN L9"/>
    <property type="match status" value="1"/>
</dbReference>
<dbReference type="Pfam" id="PF03948">
    <property type="entry name" value="Ribosomal_L9_C"/>
    <property type="match status" value="1"/>
</dbReference>
<dbReference type="Pfam" id="PF01281">
    <property type="entry name" value="Ribosomal_L9_N"/>
    <property type="match status" value="1"/>
</dbReference>
<dbReference type="SUPFAM" id="SSF55658">
    <property type="entry name" value="L9 N-domain-like"/>
    <property type="match status" value="1"/>
</dbReference>
<dbReference type="SUPFAM" id="SSF55653">
    <property type="entry name" value="Ribosomal protein L9 C-domain"/>
    <property type="match status" value="1"/>
</dbReference>
<dbReference type="PROSITE" id="PS00651">
    <property type="entry name" value="RIBOSOMAL_L9"/>
    <property type="match status" value="1"/>
</dbReference>
<gene>
    <name evidence="1" type="primary">rplI</name>
    <name type="ordered locus">EcolC_3810</name>
</gene>
<keyword id="KW-0007">Acetylation</keyword>
<keyword id="KW-0687">Ribonucleoprotein</keyword>
<keyword id="KW-0689">Ribosomal protein</keyword>
<keyword id="KW-0694">RNA-binding</keyword>
<keyword id="KW-0699">rRNA-binding</keyword>
<organism>
    <name type="scientific">Escherichia coli (strain ATCC 8739 / DSM 1576 / NBRC 3972 / NCIMB 8545 / WDCM 00012 / Crooks)</name>
    <dbReference type="NCBI Taxonomy" id="481805"/>
    <lineage>
        <taxon>Bacteria</taxon>
        <taxon>Pseudomonadati</taxon>
        <taxon>Pseudomonadota</taxon>
        <taxon>Gammaproteobacteria</taxon>
        <taxon>Enterobacterales</taxon>
        <taxon>Enterobacteriaceae</taxon>
        <taxon>Escherichia</taxon>
    </lineage>
</organism>
<sequence length="149" mass="15769">MQVILLDKVANLGSLGDQVNVKAGYARNFLVPQGKAVPATKKNIEFFEARRAELEAKLAEVLAAANARAEKINALETVTIASKAGDEGKLFGSIGTRDIADAVTAAGVEVAKSEVRLPNGVLRTTGEHEVSFQVHSEVFAKVIVNVVAE</sequence>
<comment type="function">
    <text evidence="1">Binds to the 23S rRNA.</text>
</comment>
<comment type="similarity">
    <text evidence="1">Belongs to the bacterial ribosomal protein bL9 family.</text>
</comment>
<proteinExistence type="inferred from homology"/>
<evidence type="ECO:0000255" key="1">
    <source>
        <dbReference type="HAMAP-Rule" id="MF_00503"/>
    </source>
</evidence>
<evidence type="ECO:0000305" key="2"/>
<protein>
    <recommendedName>
        <fullName evidence="1">Large ribosomal subunit protein bL9</fullName>
    </recommendedName>
    <alternativeName>
        <fullName evidence="2">50S ribosomal protein L9</fullName>
    </alternativeName>
</protein>
<reference key="1">
    <citation type="submission" date="2008-02" db="EMBL/GenBank/DDBJ databases">
        <title>Complete sequence of Escherichia coli C str. ATCC 8739.</title>
        <authorList>
            <person name="Copeland A."/>
            <person name="Lucas S."/>
            <person name="Lapidus A."/>
            <person name="Glavina del Rio T."/>
            <person name="Dalin E."/>
            <person name="Tice H."/>
            <person name="Bruce D."/>
            <person name="Goodwin L."/>
            <person name="Pitluck S."/>
            <person name="Kiss H."/>
            <person name="Brettin T."/>
            <person name="Detter J.C."/>
            <person name="Han C."/>
            <person name="Kuske C.R."/>
            <person name="Schmutz J."/>
            <person name="Larimer F."/>
            <person name="Land M."/>
            <person name="Hauser L."/>
            <person name="Kyrpides N."/>
            <person name="Mikhailova N."/>
            <person name="Ingram L."/>
            <person name="Richardson P."/>
        </authorList>
    </citation>
    <scope>NUCLEOTIDE SEQUENCE [LARGE SCALE GENOMIC DNA]</scope>
    <source>
        <strain>ATCC 8739 / DSM 1576 / NBRC 3972 / NCIMB 8545 / WDCM 00012 / Crooks</strain>
    </source>
</reference>
<name>RL9_ECOLC</name>
<accession>B1IT03</accession>
<feature type="chain" id="PRO_1000081478" description="Large ribosomal subunit protein bL9">
    <location>
        <begin position="1"/>
        <end position="149"/>
    </location>
</feature>
<feature type="modified residue" description="N6-acetyllysine" evidence="1">
    <location>
        <position position="89"/>
    </location>
</feature>